<proteinExistence type="inferred from homology"/>
<protein>
    <recommendedName>
        <fullName evidence="1">Large ribosomal subunit protein eL37</fullName>
    </recommendedName>
    <alternativeName>
        <fullName evidence="2">50S ribosomal protein L37e</fullName>
    </alternativeName>
</protein>
<evidence type="ECO:0000255" key="1">
    <source>
        <dbReference type="HAMAP-Rule" id="MF_00547"/>
    </source>
</evidence>
<evidence type="ECO:0000305" key="2"/>
<keyword id="KW-0479">Metal-binding</keyword>
<keyword id="KW-1185">Reference proteome</keyword>
<keyword id="KW-0687">Ribonucleoprotein</keyword>
<keyword id="KW-0689">Ribosomal protein</keyword>
<keyword id="KW-0694">RNA-binding</keyword>
<keyword id="KW-0699">rRNA-binding</keyword>
<keyword id="KW-0862">Zinc</keyword>
<keyword id="KW-0863">Zinc-finger</keyword>
<reference key="1">
    <citation type="journal article" date="2008" name="Genome Biol.">
        <title>A genomic analysis of the archaeal system Ignicoccus hospitalis-Nanoarchaeum equitans.</title>
        <authorList>
            <person name="Podar M."/>
            <person name="Anderson I."/>
            <person name="Makarova K.S."/>
            <person name="Elkins J.G."/>
            <person name="Ivanova N."/>
            <person name="Wall M.A."/>
            <person name="Lykidis A."/>
            <person name="Mavromatis K."/>
            <person name="Sun H."/>
            <person name="Hudson M.E."/>
            <person name="Chen W."/>
            <person name="Deciu C."/>
            <person name="Hutchison D."/>
            <person name="Eads J.R."/>
            <person name="Anderson A."/>
            <person name="Fernandes F."/>
            <person name="Szeto E."/>
            <person name="Lapidus A."/>
            <person name="Kyrpides N.C."/>
            <person name="Saier M.H. Jr."/>
            <person name="Richardson P.M."/>
            <person name="Rachel R."/>
            <person name="Huber H."/>
            <person name="Eisen J.A."/>
            <person name="Koonin E.V."/>
            <person name="Keller M."/>
            <person name="Stetter K.O."/>
        </authorList>
    </citation>
    <scope>NUCLEOTIDE SEQUENCE [LARGE SCALE GENOMIC DNA]</scope>
    <source>
        <strain>KIN4/I / DSM 18386 / JCM 14125</strain>
    </source>
</reference>
<name>RL37_IGNH4</name>
<dbReference type="EMBL" id="CP000816">
    <property type="protein sequence ID" value="ABU82159.1"/>
    <property type="molecule type" value="Genomic_DNA"/>
</dbReference>
<dbReference type="RefSeq" id="WP_012123123.1">
    <property type="nucleotide sequence ID" value="NC_009776.1"/>
</dbReference>
<dbReference type="SMR" id="A8AB57"/>
<dbReference type="STRING" id="453591.Igni_0979"/>
<dbReference type="GeneID" id="5563164"/>
<dbReference type="KEGG" id="iho:Igni_0979"/>
<dbReference type="eggNOG" id="arCOG04126">
    <property type="taxonomic scope" value="Archaea"/>
</dbReference>
<dbReference type="HOGENOM" id="CLU_208825_0_0_2"/>
<dbReference type="OrthoDB" id="5619at2157"/>
<dbReference type="PhylomeDB" id="A8AB57"/>
<dbReference type="Proteomes" id="UP000000262">
    <property type="component" value="Chromosome"/>
</dbReference>
<dbReference type="GO" id="GO:0022625">
    <property type="term" value="C:cytosolic large ribosomal subunit"/>
    <property type="evidence" value="ECO:0007669"/>
    <property type="project" value="TreeGrafter"/>
</dbReference>
<dbReference type="GO" id="GO:0019843">
    <property type="term" value="F:rRNA binding"/>
    <property type="evidence" value="ECO:0007669"/>
    <property type="project" value="UniProtKB-KW"/>
</dbReference>
<dbReference type="GO" id="GO:0003735">
    <property type="term" value="F:structural constituent of ribosome"/>
    <property type="evidence" value="ECO:0007669"/>
    <property type="project" value="InterPro"/>
</dbReference>
<dbReference type="GO" id="GO:0008270">
    <property type="term" value="F:zinc ion binding"/>
    <property type="evidence" value="ECO:0007669"/>
    <property type="project" value="UniProtKB-UniRule"/>
</dbReference>
<dbReference type="GO" id="GO:0006412">
    <property type="term" value="P:translation"/>
    <property type="evidence" value="ECO:0007669"/>
    <property type="project" value="UniProtKB-UniRule"/>
</dbReference>
<dbReference type="FunFam" id="2.20.25.30:FF:000003">
    <property type="entry name" value="50S ribosomal protein L37e"/>
    <property type="match status" value="1"/>
</dbReference>
<dbReference type="Gene3D" id="2.20.25.30">
    <property type="match status" value="1"/>
</dbReference>
<dbReference type="HAMAP" id="MF_00547">
    <property type="entry name" value="Ribosomal_eL37"/>
    <property type="match status" value="1"/>
</dbReference>
<dbReference type="InterPro" id="IPR001569">
    <property type="entry name" value="Ribosomal_eL37"/>
</dbReference>
<dbReference type="InterPro" id="IPR011331">
    <property type="entry name" value="Ribosomal_eL37/eL43"/>
</dbReference>
<dbReference type="InterPro" id="IPR018267">
    <property type="entry name" value="Ribosomal_eL37_CS"/>
</dbReference>
<dbReference type="InterPro" id="IPR011332">
    <property type="entry name" value="Ribosomal_zn-bd"/>
</dbReference>
<dbReference type="NCBIfam" id="NF003214">
    <property type="entry name" value="PRK04179.1"/>
    <property type="match status" value="1"/>
</dbReference>
<dbReference type="PANTHER" id="PTHR10768">
    <property type="entry name" value="60S RIBOSOMAL PROTEIN L37"/>
    <property type="match status" value="1"/>
</dbReference>
<dbReference type="PANTHER" id="PTHR10768:SF0">
    <property type="entry name" value="RIBOSOMAL PROTEIN L37"/>
    <property type="match status" value="1"/>
</dbReference>
<dbReference type="Pfam" id="PF01907">
    <property type="entry name" value="Ribosomal_L37e"/>
    <property type="match status" value="1"/>
</dbReference>
<dbReference type="SUPFAM" id="SSF57829">
    <property type="entry name" value="Zn-binding ribosomal proteins"/>
    <property type="match status" value="1"/>
</dbReference>
<dbReference type="PROSITE" id="PS01077">
    <property type="entry name" value="RIBOSOMAL_L37E"/>
    <property type="match status" value="1"/>
</dbReference>
<gene>
    <name evidence="1" type="primary">rpl37e</name>
    <name type="ordered locus">Igni_0979</name>
</gene>
<sequence length="63" mass="7504">MSKGTPSFGKHNKGKTHIRCRRCGRHSFNVRKGYCVACGFGRSKRMRRYSWQNKKSWTRVRLK</sequence>
<organism>
    <name type="scientific">Ignicoccus hospitalis (strain KIN4/I / DSM 18386 / JCM 14125)</name>
    <dbReference type="NCBI Taxonomy" id="453591"/>
    <lineage>
        <taxon>Archaea</taxon>
        <taxon>Thermoproteota</taxon>
        <taxon>Thermoprotei</taxon>
        <taxon>Desulfurococcales</taxon>
        <taxon>Desulfurococcaceae</taxon>
        <taxon>Ignicoccus</taxon>
    </lineage>
</organism>
<feature type="chain" id="PRO_1000061080" description="Large ribosomal subunit protein eL37">
    <location>
        <begin position="1"/>
        <end position="63"/>
    </location>
</feature>
<feature type="zinc finger region" description="C4-type" evidence="1">
    <location>
        <begin position="20"/>
        <end position="38"/>
    </location>
</feature>
<feature type="binding site" evidence="1">
    <location>
        <position position="20"/>
    </location>
    <ligand>
        <name>Zn(2+)</name>
        <dbReference type="ChEBI" id="CHEBI:29105"/>
    </ligand>
</feature>
<feature type="binding site" evidence="1">
    <location>
        <position position="23"/>
    </location>
    <ligand>
        <name>Zn(2+)</name>
        <dbReference type="ChEBI" id="CHEBI:29105"/>
    </ligand>
</feature>
<feature type="binding site" evidence="1">
    <location>
        <position position="35"/>
    </location>
    <ligand>
        <name>Zn(2+)</name>
        <dbReference type="ChEBI" id="CHEBI:29105"/>
    </ligand>
</feature>
<feature type="binding site" evidence="1">
    <location>
        <position position="38"/>
    </location>
    <ligand>
        <name>Zn(2+)</name>
        <dbReference type="ChEBI" id="CHEBI:29105"/>
    </ligand>
</feature>
<comment type="function">
    <text evidence="1">Binds to the 23S rRNA.</text>
</comment>
<comment type="cofactor">
    <cofactor evidence="1">
        <name>Zn(2+)</name>
        <dbReference type="ChEBI" id="CHEBI:29105"/>
    </cofactor>
    <text evidence="1">Binds 1 zinc ion per subunit.</text>
</comment>
<comment type="similarity">
    <text evidence="1">Belongs to the eukaryotic ribosomal protein eL37 family.</text>
</comment>
<accession>A8AB57</accession>